<feature type="chain" id="PRO_1000082230" description="Succinate--CoA ligase [ADP-forming] subunit beta">
    <location>
        <begin position="1"/>
        <end position="388"/>
    </location>
</feature>
<feature type="domain" description="ATP-grasp" evidence="1">
    <location>
        <begin position="9"/>
        <end position="244"/>
    </location>
</feature>
<feature type="binding site" evidence="1">
    <location>
        <position position="46"/>
    </location>
    <ligand>
        <name>ATP</name>
        <dbReference type="ChEBI" id="CHEBI:30616"/>
    </ligand>
</feature>
<feature type="binding site" evidence="1">
    <location>
        <begin position="53"/>
        <end position="55"/>
    </location>
    <ligand>
        <name>ATP</name>
        <dbReference type="ChEBI" id="CHEBI:30616"/>
    </ligand>
</feature>
<feature type="binding site" evidence="1">
    <location>
        <position position="99"/>
    </location>
    <ligand>
        <name>ATP</name>
        <dbReference type="ChEBI" id="CHEBI:30616"/>
    </ligand>
</feature>
<feature type="binding site" evidence="1">
    <location>
        <position position="102"/>
    </location>
    <ligand>
        <name>ATP</name>
        <dbReference type="ChEBI" id="CHEBI:30616"/>
    </ligand>
</feature>
<feature type="binding site" evidence="1">
    <location>
        <position position="107"/>
    </location>
    <ligand>
        <name>ATP</name>
        <dbReference type="ChEBI" id="CHEBI:30616"/>
    </ligand>
</feature>
<feature type="binding site" evidence="1">
    <location>
        <position position="199"/>
    </location>
    <ligand>
        <name>Mg(2+)</name>
        <dbReference type="ChEBI" id="CHEBI:18420"/>
    </ligand>
</feature>
<feature type="binding site" evidence="1">
    <location>
        <position position="213"/>
    </location>
    <ligand>
        <name>Mg(2+)</name>
        <dbReference type="ChEBI" id="CHEBI:18420"/>
    </ligand>
</feature>
<feature type="binding site" evidence="1">
    <location>
        <position position="264"/>
    </location>
    <ligand>
        <name>substrate</name>
        <note>ligand shared with subunit alpha</note>
    </ligand>
</feature>
<feature type="binding site" evidence="1">
    <location>
        <begin position="321"/>
        <end position="323"/>
    </location>
    <ligand>
        <name>substrate</name>
        <note>ligand shared with subunit alpha</note>
    </ligand>
</feature>
<organism>
    <name type="scientific">Shewanella sp. (strain MR-7)</name>
    <dbReference type="NCBI Taxonomy" id="60481"/>
    <lineage>
        <taxon>Bacteria</taxon>
        <taxon>Pseudomonadati</taxon>
        <taxon>Pseudomonadota</taxon>
        <taxon>Gammaproteobacteria</taxon>
        <taxon>Alteromonadales</taxon>
        <taxon>Shewanellaceae</taxon>
        <taxon>Shewanella</taxon>
    </lineage>
</organism>
<comment type="function">
    <text evidence="1">Succinyl-CoA synthetase functions in the citric acid cycle (TCA), coupling the hydrolysis of succinyl-CoA to the synthesis of either ATP or GTP and thus represents the only step of substrate-level phosphorylation in the TCA. The beta subunit provides nucleotide specificity of the enzyme and binds the substrate succinate, while the binding sites for coenzyme A and phosphate are found in the alpha subunit.</text>
</comment>
<comment type="catalytic activity">
    <reaction evidence="1">
        <text>succinate + ATP + CoA = succinyl-CoA + ADP + phosphate</text>
        <dbReference type="Rhea" id="RHEA:17661"/>
        <dbReference type="ChEBI" id="CHEBI:30031"/>
        <dbReference type="ChEBI" id="CHEBI:30616"/>
        <dbReference type="ChEBI" id="CHEBI:43474"/>
        <dbReference type="ChEBI" id="CHEBI:57287"/>
        <dbReference type="ChEBI" id="CHEBI:57292"/>
        <dbReference type="ChEBI" id="CHEBI:456216"/>
        <dbReference type="EC" id="6.2.1.5"/>
    </reaction>
    <physiologicalReaction direction="right-to-left" evidence="1">
        <dbReference type="Rhea" id="RHEA:17663"/>
    </physiologicalReaction>
</comment>
<comment type="catalytic activity">
    <reaction evidence="1">
        <text>GTP + succinate + CoA = succinyl-CoA + GDP + phosphate</text>
        <dbReference type="Rhea" id="RHEA:22120"/>
        <dbReference type="ChEBI" id="CHEBI:30031"/>
        <dbReference type="ChEBI" id="CHEBI:37565"/>
        <dbReference type="ChEBI" id="CHEBI:43474"/>
        <dbReference type="ChEBI" id="CHEBI:57287"/>
        <dbReference type="ChEBI" id="CHEBI:57292"/>
        <dbReference type="ChEBI" id="CHEBI:58189"/>
    </reaction>
    <physiologicalReaction direction="right-to-left" evidence="1">
        <dbReference type="Rhea" id="RHEA:22122"/>
    </physiologicalReaction>
</comment>
<comment type="cofactor">
    <cofactor evidence="1">
        <name>Mg(2+)</name>
        <dbReference type="ChEBI" id="CHEBI:18420"/>
    </cofactor>
    <text evidence="1">Binds 1 Mg(2+) ion per subunit.</text>
</comment>
<comment type="pathway">
    <text evidence="1">Carbohydrate metabolism; tricarboxylic acid cycle; succinate from succinyl-CoA (ligase route): step 1/1.</text>
</comment>
<comment type="subunit">
    <text evidence="1">Heterotetramer of two alpha and two beta subunits.</text>
</comment>
<comment type="similarity">
    <text evidence="1">Belongs to the succinate/malate CoA ligase beta subunit family.</text>
</comment>
<sequence>MNLHEYQAKSLFAEYGLPVSEGFACDTAQEAVEAAGRIGGNLWVVKCQVHAGGRGKAGGVKVTGDKEEIRAFAEHWLGKNLVTYQTDEKGQPVAKILVESCTDIANELYLGAVVDRATRRVVFMASTEGGVEIEKVAEETPELIHKAIIDPLTGPQPYQARDLGFKLGLNPTQMKQFTKIFMGLATMFVDHDFALLEINPLVITTEGNLHCLDGKIGIDGNALFRQPKIKAMHDPSQDDAREAHAAMFELNYVALDGNVGCMVNGAGLAMGTMDIVNLHGGKPANFLDVGGGATKERVAEAFKIILSDSNVKAVLVNIFGGIVRCDMIAEGIIGAVKEVGVKVPVVVRLEGTNAELGREVLAKSGLDIIAANSLTDAAEQVVKAAEGK</sequence>
<protein>
    <recommendedName>
        <fullName evidence="1">Succinate--CoA ligase [ADP-forming] subunit beta</fullName>
        <ecNumber evidence="1">6.2.1.5</ecNumber>
    </recommendedName>
    <alternativeName>
        <fullName evidence="1">Succinyl-CoA synthetase subunit beta</fullName>
        <shortName evidence="1">SCS-beta</shortName>
    </alternativeName>
</protein>
<dbReference type="EC" id="6.2.1.5" evidence="1"/>
<dbReference type="EMBL" id="CP000444">
    <property type="protein sequence ID" value="ABI42705.1"/>
    <property type="molecule type" value="Genomic_DNA"/>
</dbReference>
<dbReference type="SMR" id="Q0HW00"/>
<dbReference type="KEGG" id="shm:Shewmr7_1712"/>
<dbReference type="HOGENOM" id="CLU_037430_0_2_6"/>
<dbReference type="UniPathway" id="UPA00223">
    <property type="reaction ID" value="UER00999"/>
</dbReference>
<dbReference type="GO" id="GO:0005829">
    <property type="term" value="C:cytosol"/>
    <property type="evidence" value="ECO:0007669"/>
    <property type="project" value="TreeGrafter"/>
</dbReference>
<dbReference type="GO" id="GO:0042709">
    <property type="term" value="C:succinate-CoA ligase complex"/>
    <property type="evidence" value="ECO:0007669"/>
    <property type="project" value="TreeGrafter"/>
</dbReference>
<dbReference type="GO" id="GO:0005524">
    <property type="term" value="F:ATP binding"/>
    <property type="evidence" value="ECO:0007669"/>
    <property type="project" value="UniProtKB-UniRule"/>
</dbReference>
<dbReference type="GO" id="GO:0000287">
    <property type="term" value="F:magnesium ion binding"/>
    <property type="evidence" value="ECO:0007669"/>
    <property type="project" value="UniProtKB-UniRule"/>
</dbReference>
<dbReference type="GO" id="GO:0004775">
    <property type="term" value="F:succinate-CoA ligase (ADP-forming) activity"/>
    <property type="evidence" value="ECO:0007669"/>
    <property type="project" value="UniProtKB-UniRule"/>
</dbReference>
<dbReference type="GO" id="GO:0004776">
    <property type="term" value="F:succinate-CoA ligase (GDP-forming) activity"/>
    <property type="evidence" value="ECO:0007669"/>
    <property type="project" value="RHEA"/>
</dbReference>
<dbReference type="GO" id="GO:0006104">
    <property type="term" value="P:succinyl-CoA metabolic process"/>
    <property type="evidence" value="ECO:0007669"/>
    <property type="project" value="TreeGrafter"/>
</dbReference>
<dbReference type="GO" id="GO:0006099">
    <property type="term" value="P:tricarboxylic acid cycle"/>
    <property type="evidence" value="ECO:0007669"/>
    <property type="project" value="UniProtKB-UniRule"/>
</dbReference>
<dbReference type="FunFam" id="3.30.1490.20:FF:000002">
    <property type="entry name" value="Succinate--CoA ligase [ADP-forming] subunit beta"/>
    <property type="match status" value="1"/>
</dbReference>
<dbReference type="FunFam" id="3.30.470.20:FF:000002">
    <property type="entry name" value="Succinate--CoA ligase [ADP-forming] subunit beta"/>
    <property type="match status" value="1"/>
</dbReference>
<dbReference type="FunFam" id="3.40.50.261:FF:000001">
    <property type="entry name" value="Succinate--CoA ligase [ADP-forming] subunit beta"/>
    <property type="match status" value="1"/>
</dbReference>
<dbReference type="Gene3D" id="3.30.1490.20">
    <property type="entry name" value="ATP-grasp fold, A domain"/>
    <property type="match status" value="1"/>
</dbReference>
<dbReference type="Gene3D" id="3.30.470.20">
    <property type="entry name" value="ATP-grasp fold, B domain"/>
    <property type="match status" value="1"/>
</dbReference>
<dbReference type="Gene3D" id="3.40.50.261">
    <property type="entry name" value="Succinyl-CoA synthetase domains"/>
    <property type="match status" value="1"/>
</dbReference>
<dbReference type="HAMAP" id="MF_00558">
    <property type="entry name" value="Succ_CoA_beta"/>
    <property type="match status" value="1"/>
</dbReference>
<dbReference type="InterPro" id="IPR011761">
    <property type="entry name" value="ATP-grasp"/>
</dbReference>
<dbReference type="InterPro" id="IPR013650">
    <property type="entry name" value="ATP-grasp_succ-CoA_synth-type"/>
</dbReference>
<dbReference type="InterPro" id="IPR013815">
    <property type="entry name" value="ATP_grasp_subdomain_1"/>
</dbReference>
<dbReference type="InterPro" id="IPR017866">
    <property type="entry name" value="Succ-CoA_synthase_bsu_CS"/>
</dbReference>
<dbReference type="InterPro" id="IPR005811">
    <property type="entry name" value="SUCC_ACL_C"/>
</dbReference>
<dbReference type="InterPro" id="IPR005809">
    <property type="entry name" value="Succ_CoA_ligase-like_bsu"/>
</dbReference>
<dbReference type="InterPro" id="IPR016102">
    <property type="entry name" value="Succinyl-CoA_synth-like"/>
</dbReference>
<dbReference type="NCBIfam" id="NF001913">
    <property type="entry name" value="PRK00696.1"/>
    <property type="match status" value="1"/>
</dbReference>
<dbReference type="NCBIfam" id="TIGR01016">
    <property type="entry name" value="sucCoAbeta"/>
    <property type="match status" value="1"/>
</dbReference>
<dbReference type="PANTHER" id="PTHR11815:SF10">
    <property type="entry name" value="SUCCINATE--COA LIGASE [GDP-FORMING] SUBUNIT BETA, MITOCHONDRIAL"/>
    <property type="match status" value="1"/>
</dbReference>
<dbReference type="PANTHER" id="PTHR11815">
    <property type="entry name" value="SUCCINYL-COA SYNTHETASE BETA CHAIN"/>
    <property type="match status" value="1"/>
</dbReference>
<dbReference type="Pfam" id="PF08442">
    <property type="entry name" value="ATP-grasp_2"/>
    <property type="match status" value="1"/>
</dbReference>
<dbReference type="Pfam" id="PF00549">
    <property type="entry name" value="Ligase_CoA"/>
    <property type="match status" value="1"/>
</dbReference>
<dbReference type="PIRSF" id="PIRSF001554">
    <property type="entry name" value="SucCS_beta"/>
    <property type="match status" value="1"/>
</dbReference>
<dbReference type="SUPFAM" id="SSF56059">
    <property type="entry name" value="Glutathione synthetase ATP-binding domain-like"/>
    <property type="match status" value="1"/>
</dbReference>
<dbReference type="SUPFAM" id="SSF52210">
    <property type="entry name" value="Succinyl-CoA synthetase domains"/>
    <property type="match status" value="1"/>
</dbReference>
<dbReference type="PROSITE" id="PS50975">
    <property type="entry name" value="ATP_GRASP"/>
    <property type="match status" value="1"/>
</dbReference>
<dbReference type="PROSITE" id="PS01217">
    <property type="entry name" value="SUCCINYL_COA_LIG_3"/>
    <property type="match status" value="1"/>
</dbReference>
<evidence type="ECO:0000255" key="1">
    <source>
        <dbReference type="HAMAP-Rule" id="MF_00558"/>
    </source>
</evidence>
<name>SUCC_SHESR</name>
<accession>Q0HW00</accession>
<proteinExistence type="inferred from homology"/>
<keyword id="KW-0067">ATP-binding</keyword>
<keyword id="KW-0436">Ligase</keyword>
<keyword id="KW-0460">Magnesium</keyword>
<keyword id="KW-0479">Metal-binding</keyword>
<keyword id="KW-0547">Nucleotide-binding</keyword>
<keyword id="KW-0816">Tricarboxylic acid cycle</keyword>
<gene>
    <name evidence="1" type="primary">sucC</name>
    <name type="ordered locus">Shewmr7_1712</name>
</gene>
<reference key="1">
    <citation type="submission" date="2006-08" db="EMBL/GenBank/DDBJ databases">
        <title>Complete sequence of chromosome 1 of Shewanella sp. MR-7.</title>
        <authorList>
            <person name="Copeland A."/>
            <person name="Lucas S."/>
            <person name="Lapidus A."/>
            <person name="Barry K."/>
            <person name="Detter J.C."/>
            <person name="Glavina del Rio T."/>
            <person name="Hammon N."/>
            <person name="Israni S."/>
            <person name="Dalin E."/>
            <person name="Tice H."/>
            <person name="Pitluck S."/>
            <person name="Kiss H."/>
            <person name="Brettin T."/>
            <person name="Bruce D."/>
            <person name="Han C."/>
            <person name="Tapia R."/>
            <person name="Gilna P."/>
            <person name="Schmutz J."/>
            <person name="Larimer F."/>
            <person name="Land M."/>
            <person name="Hauser L."/>
            <person name="Kyrpides N."/>
            <person name="Mikhailova N."/>
            <person name="Nealson K."/>
            <person name="Konstantinidis K."/>
            <person name="Klappenbach J."/>
            <person name="Tiedje J."/>
            <person name="Richardson P."/>
        </authorList>
    </citation>
    <scope>NUCLEOTIDE SEQUENCE [LARGE SCALE GENOMIC DNA]</scope>
    <source>
        <strain>MR-7</strain>
    </source>
</reference>